<protein>
    <recommendedName>
        <fullName evidence="1">Protein SlyX homolog</fullName>
    </recommendedName>
</protein>
<feature type="chain" id="PRO_0000209207" description="Protein SlyX homolog">
    <location>
        <begin position="1"/>
        <end position="69"/>
    </location>
</feature>
<organism>
    <name type="scientific">Pseudomonas aeruginosa (strain ATCC 15692 / DSM 22644 / CIP 104116 / JCM 14847 / LMG 12228 / 1C / PRS 101 / PAO1)</name>
    <dbReference type="NCBI Taxonomy" id="208964"/>
    <lineage>
        <taxon>Bacteria</taxon>
        <taxon>Pseudomonadati</taxon>
        <taxon>Pseudomonadota</taxon>
        <taxon>Gammaproteobacteria</taxon>
        <taxon>Pseudomonadales</taxon>
        <taxon>Pseudomonadaceae</taxon>
        <taxon>Pseudomonas</taxon>
    </lineage>
</organism>
<accession>Q9I4Z9</accession>
<keyword id="KW-1185">Reference proteome</keyword>
<sequence length="69" mass="7821">MELDARMDDLECRQAFQDDTLQALNDVVVEQQRSIERLQLQVAALIKRLEDVQGLVGEAGEDEAPPPHY</sequence>
<reference key="1">
    <citation type="journal article" date="2000" name="Nature">
        <title>Complete genome sequence of Pseudomonas aeruginosa PAO1, an opportunistic pathogen.</title>
        <authorList>
            <person name="Stover C.K."/>
            <person name="Pham X.-Q.T."/>
            <person name="Erwin A.L."/>
            <person name="Mizoguchi S.D."/>
            <person name="Warrener P."/>
            <person name="Hickey M.J."/>
            <person name="Brinkman F.S.L."/>
            <person name="Hufnagle W.O."/>
            <person name="Kowalik D.J."/>
            <person name="Lagrou M."/>
            <person name="Garber R.L."/>
            <person name="Goltry L."/>
            <person name="Tolentino E."/>
            <person name="Westbrock-Wadman S."/>
            <person name="Yuan Y."/>
            <person name="Brody L.L."/>
            <person name="Coulter S.N."/>
            <person name="Folger K.R."/>
            <person name="Kas A."/>
            <person name="Larbig K."/>
            <person name="Lim R.M."/>
            <person name="Smith K.A."/>
            <person name="Spencer D.H."/>
            <person name="Wong G.K.-S."/>
            <person name="Wu Z."/>
            <person name="Paulsen I.T."/>
            <person name="Reizer J."/>
            <person name="Saier M.H. Jr."/>
            <person name="Hancock R.E.W."/>
            <person name="Lory S."/>
            <person name="Olson M.V."/>
        </authorList>
    </citation>
    <scope>NUCLEOTIDE SEQUENCE [LARGE SCALE GENOMIC DNA]</scope>
    <source>
        <strain>ATCC 15692 / DSM 22644 / CIP 104116 / JCM 14847 / LMG 12228 / 1C / PRS 101 / PAO1</strain>
    </source>
</reference>
<evidence type="ECO:0000255" key="1">
    <source>
        <dbReference type="HAMAP-Rule" id="MF_00715"/>
    </source>
</evidence>
<name>SLYX_PSEAE</name>
<gene>
    <name evidence="1" type="primary">slyX</name>
    <name type="ordered locus">PA0960</name>
</gene>
<proteinExistence type="inferred from homology"/>
<dbReference type="EMBL" id="AE004091">
    <property type="protein sequence ID" value="AAG04349.1"/>
    <property type="molecule type" value="Genomic_DNA"/>
</dbReference>
<dbReference type="PIR" id="B83524">
    <property type="entry name" value="B83524"/>
</dbReference>
<dbReference type="RefSeq" id="NP_249651.1">
    <property type="nucleotide sequence ID" value="NC_002516.2"/>
</dbReference>
<dbReference type="RefSeq" id="WP_003086099.1">
    <property type="nucleotide sequence ID" value="NZ_QZGE01000007.1"/>
</dbReference>
<dbReference type="SMR" id="Q9I4Z9"/>
<dbReference type="FunCoup" id="Q9I4Z9">
    <property type="interactions" value="9"/>
</dbReference>
<dbReference type="STRING" id="208964.PA0960"/>
<dbReference type="PaxDb" id="208964-PA0960"/>
<dbReference type="GeneID" id="882073"/>
<dbReference type="KEGG" id="pae:PA0960"/>
<dbReference type="PATRIC" id="fig|208964.12.peg.998"/>
<dbReference type="PseudoCAP" id="PA0960"/>
<dbReference type="HOGENOM" id="CLU_180796_4_1_6"/>
<dbReference type="InParanoid" id="Q9I4Z9"/>
<dbReference type="OrthoDB" id="8606883at2"/>
<dbReference type="PhylomeDB" id="Q9I4Z9"/>
<dbReference type="BioCyc" id="PAER208964:G1FZ6-981-MONOMER"/>
<dbReference type="Proteomes" id="UP000002438">
    <property type="component" value="Chromosome"/>
</dbReference>
<dbReference type="Gene3D" id="1.20.5.300">
    <property type="match status" value="1"/>
</dbReference>
<dbReference type="HAMAP" id="MF_00715">
    <property type="entry name" value="SlyX"/>
    <property type="match status" value="1"/>
</dbReference>
<dbReference type="InterPro" id="IPR007236">
    <property type="entry name" value="SlyX"/>
</dbReference>
<dbReference type="NCBIfam" id="NF001421">
    <property type="entry name" value="PRK00295.1"/>
    <property type="match status" value="1"/>
</dbReference>
<dbReference type="PANTHER" id="PTHR36508">
    <property type="entry name" value="PROTEIN SLYX"/>
    <property type="match status" value="1"/>
</dbReference>
<dbReference type="PANTHER" id="PTHR36508:SF1">
    <property type="entry name" value="PROTEIN SLYX"/>
    <property type="match status" value="1"/>
</dbReference>
<dbReference type="Pfam" id="PF04102">
    <property type="entry name" value="SlyX"/>
    <property type="match status" value="1"/>
</dbReference>
<comment type="similarity">
    <text evidence="1">Belongs to the SlyX family.</text>
</comment>